<comment type="function">
    <text evidence="1">With S4 and S12 plays an important role in translational accuracy.</text>
</comment>
<comment type="function">
    <text evidence="1">Located at the back of the 30S subunit body where it stabilizes the conformation of the head with respect to the body.</text>
</comment>
<comment type="subunit">
    <text evidence="1">Part of the 30S ribosomal subunit. Contacts proteins S4 and S8.</text>
</comment>
<comment type="domain">
    <text>The N-terminal domain interacts with the head of the 30S subunit; the C-terminal domain interacts with the body and contacts protein S4. The interaction surface between S4 and S5 is involved in control of translational fidelity.</text>
</comment>
<comment type="similarity">
    <text evidence="1">Belongs to the universal ribosomal protein uS5 family.</text>
</comment>
<accession>B7GNC3</accession>
<accession>E8MN67</accession>
<dbReference type="EMBL" id="CP001095">
    <property type="protein sequence ID" value="ACJ53279.1"/>
    <property type="molecule type" value="Genomic_DNA"/>
</dbReference>
<dbReference type="EMBL" id="AP010889">
    <property type="protein sequence ID" value="BAJ69870.1"/>
    <property type="molecule type" value="Genomic_DNA"/>
</dbReference>
<dbReference type="RefSeq" id="WP_007053804.1">
    <property type="nucleotide sequence ID" value="NZ_JDTT01000039.1"/>
</dbReference>
<dbReference type="SMR" id="B7GNC3"/>
<dbReference type="GeneID" id="69578880"/>
<dbReference type="KEGG" id="bln:Blon_2220"/>
<dbReference type="KEGG" id="blon:BLIJ_2293"/>
<dbReference type="PATRIC" id="fig|391904.8.peg.2295"/>
<dbReference type="HOGENOM" id="CLU_065898_1_1_11"/>
<dbReference type="Proteomes" id="UP000001360">
    <property type="component" value="Chromosome"/>
</dbReference>
<dbReference type="GO" id="GO:0015935">
    <property type="term" value="C:small ribosomal subunit"/>
    <property type="evidence" value="ECO:0007669"/>
    <property type="project" value="InterPro"/>
</dbReference>
<dbReference type="GO" id="GO:0019843">
    <property type="term" value="F:rRNA binding"/>
    <property type="evidence" value="ECO:0007669"/>
    <property type="project" value="UniProtKB-UniRule"/>
</dbReference>
<dbReference type="GO" id="GO:0003735">
    <property type="term" value="F:structural constituent of ribosome"/>
    <property type="evidence" value="ECO:0007669"/>
    <property type="project" value="InterPro"/>
</dbReference>
<dbReference type="GO" id="GO:0006412">
    <property type="term" value="P:translation"/>
    <property type="evidence" value="ECO:0007669"/>
    <property type="project" value="UniProtKB-UniRule"/>
</dbReference>
<dbReference type="FunFam" id="3.30.160.20:FF:000001">
    <property type="entry name" value="30S ribosomal protein S5"/>
    <property type="match status" value="1"/>
</dbReference>
<dbReference type="FunFam" id="3.30.230.10:FF:000002">
    <property type="entry name" value="30S ribosomal protein S5"/>
    <property type="match status" value="1"/>
</dbReference>
<dbReference type="Gene3D" id="3.30.160.20">
    <property type="match status" value="1"/>
</dbReference>
<dbReference type="Gene3D" id="3.30.230.10">
    <property type="match status" value="1"/>
</dbReference>
<dbReference type="HAMAP" id="MF_01307_B">
    <property type="entry name" value="Ribosomal_uS5_B"/>
    <property type="match status" value="1"/>
</dbReference>
<dbReference type="InterPro" id="IPR020568">
    <property type="entry name" value="Ribosomal_Su5_D2-typ_SF"/>
</dbReference>
<dbReference type="InterPro" id="IPR000851">
    <property type="entry name" value="Ribosomal_uS5"/>
</dbReference>
<dbReference type="InterPro" id="IPR005712">
    <property type="entry name" value="Ribosomal_uS5_bac-type"/>
</dbReference>
<dbReference type="InterPro" id="IPR005324">
    <property type="entry name" value="Ribosomal_uS5_C"/>
</dbReference>
<dbReference type="InterPro" id="IPR013810">
    <property type="entry name" value="Ribosomal_uS5_N"/>
</dbReference>
<dbReference type="InterPro" id="IPR018192">
    <property type="entry name" value="Ribosomal_uS5_N_CS"/>
</dbReference>
<dbReference type="InterPro" id="IPR014721">
    <property type="entry name" value="Ribsml_uS5_D2-typ_fold_subgr"/>
</dbReference>
<dbReference type="NCBIfam" id="TIGR01021">
    <property type="entry name" value="rpsE_bact"/>
    <property type="match status" value="1"/>
</dbReference>
<dbReference type="PANTHER" id="PTHR48277">
    <property type="entry name" value="MITOCHONDRIAL RIBOSOMAL PROTEIN S5"/>
    <property type="match status" value="1"/>
</dbReference>
<dbReference type="PANTHER" id="PTHR48277:SF1">
    <property type="entry name" value="MITOCHONDRIAL RIBOSOMAL PROTEIN S5"/>
    <property type="match status" value="1"/>
</dbReference>
<dbReference type="Pfam" id="PF00333">
    <property type="entry name" value="Ribosomal_S5"/>
    <property type="match status" value="1"/>
</dbReference>
<dbReference type="Pfam" id="PF03719">
    <property type="entry name" value="Ribosomal_S5_C"/>
    <property type="match status" value="1"/>
</dbReference>
<dbReference type="SUPFAM" id="SSF54768">
    <property type="entry name" value="dsRNA-binding domain-like"/>
    <property type="match status" value="1"/>
</dbReference>
<dbReference type="SUPFAM" id="SSF54211">
    <property type="entry name" value="Ribosomal protein S5 domain 2-like"/>
    <property type="match status" value="1"/>
</dbReference>
<dbReference type="PROSITE" id="PS00585">
    <property type="entry name" value="RIBOSOMAL_S5"/>
    <property type="match status" value="1"/>
</dbReference>
<dbReference type="PROSITE" id="PS50881">
    <property type="entry name" value="S5_DSRBD"/>
    <property type="match status" value="1"/>
</dbReference>
<feature type="chain" id="PRO_1000165443" description="Small ribosomal subunit protein uS5">
    <location>
        <begin position="1"/>
        <end position="243"/>
    </location>
</feature>
<feature type="domain" description="S5 DRBM" evidence="1">
    <location>
        <begin position="55"/>
        <end position="118"/>
    </location>
</feature>
<feature type="region of interest" description="Disordered" evidence="2">
    <location>
        <begin position="1"/>
        <end position="50"/>
    </location>
</feature>
<feature type="compositionally biased region" description="Basic and acidic residues" evidence="2">
    <location>
        <begin position="1"/>
        <end position="10"/>
    </location>
</feature>
<feature type="compositionally biased region" description="Polar residues" evidence="2">
    <location>
        <begin position="12"/>
        <end position="23"/>
    </location>
</feature>
<feature type="compositionally biased region" description="Basic and acidic residues" evidence="2">
    <location>
        <begin position="25"/>
        <end position="50"/>
    </location>
</feature>
<proteinExistence type="inferred from homology"/>
<gene>
    <name evidence="1" type="primary">rpsE</name>
    <name type="ordered locus">Blon_2220</name>
    <name type="ordered locus">BLIJ_2293</name>
</gene>
<evidence type="ECO:0000255" key="1">
    <source>
        <dbReference type="HAMAP-Rule" id="MF_01307"/>
    </source>
</evidence>
<evidence type="ECO:0000256" key="2">
    <source>
        <dbReference type="SAM" id="MobiDB-lite"/>
    </source>
</evidence>
<evidence type="ECO:0000305" key="3"/>
<reference key="1">
    <citation type="journal article" date="2008" name="Proc. Natl. Acad. Sci. U.S.A.">
        <title>The genome sequence of Bifidobacterium longum subsp. infantis reveals adaptations for milk utilization within the infant microbiome.</title>
        <authorList>
            <person name="Sela D.A."/>
            <person name="Chapman J."/>
            <person name="Adeuya A."/>
            <person name="Kim J.H."/>
            <person name="Chen F."/>
            <person name="Whitehead T.R."/>
            <person name="Lapidus A."/>
            <person name="Rokhsar D.S."/>
            <person name="Lebrilla C.B."/>
            <person name="German J.B."/>
            <person name="Price N.P."/>
            <person name="Richardson P.M."/>
            <person name="Mills D.A."/>
        </authorList>
    </citation>
    <scope>NUCLEOTIDE SEQUENCE [LARGE SCALE GENOMIC DNA]</scope>
    <source>
        <strain>ATCC 15697 / DSM 20088 / JCM 1222 / NCTC 11817 / S12</strain>
    </source>
</reference>
<reference key="2">
    <citation type="journal article" date="2011" name="Nature">
        <title>Bifidobacteria can protect from enteropathogenic infection through production of acetate.</title>
        <authorList>
            <person name="Fukuda S."/>
            <person name="Toh H."/>
            <person name="Hase K."/>
            <person name="Oshima K."/>
            <person name="Nakanishi Y."/>
            <person name="Yoshimura K."/>
            <person name="Tobe T."/>
            <person name="Clarke J.M."/>
            <person name="Topping D.L."/>
            <person name="Suzuki T."/>
            <person name="Taylor T.D."/>
            <person name="Itoh K."/>
            <person name="Kikuchi J."/>
            <person name="Morita H."/>
            <person name="Hattori M."/>
            <person name="Ohno H."/>
        </authorList>
    </citation>
    <scope>NUCLEOTIDE SEQUENCE [LARGE SCALE GENOMIC DNA]</scope>
    <source>
        <strain>ATCC 15697 / DSM 20088 / JCM 1222 / NCTC 11817 / S12</strain>
    </source>
</reference>
<keyword id="KW-0687">Ribonucleoprotein</keyword>
<keyword id="KW-0689">Ribosomal protein</keyword>
<keyword id="KW-0694">RNA-binding</keyword>
<keyword id="KW-0699">rRNA-binding</keyword>
<name>RS5_BIFLS</name>
<organism>
    <name type="scientific">Bifidobacterium longum subsp. infantis (strain ATCC 15697 / DSM 20088 / JCM 1222 / NCTC 11817 / S12)</name>
    <dbReference type="NCBI Taxonomy" id="391904"/>
    <lineage>
        <taxon>Bacteria</taxon>
        <taxon>Bacillati</taxon>
        <taxon>Actinomycetota</taxon>
        <taxon>Actinomycetes</taxon>
        <taxon>Bifidobacteriales</taxon>
        <taxon>Bifidobacteriaceae</taxon>
        <taxon>Bifidobacterium</taxon>
    </lineage>
</organism>
<protein>
    <recommendedName>
        <fullName evidence="1">Small ribosomal subunit protein uS5</fullName>
    </recommendedName>
    <alternativeName>
        <fullName evidence="3">30S ribosomal protein S5</fullName>
    </alternativeName>
</protein>
<sequence>MSDNETKETQVAEETQNTVATESNNEDRKGRRGQRGEGRRGERRNRREENHGDELLDRVVTINRVSKTHKGGRTFSFAALVVVGDGNGTVGVGYGKSREVPAAIAKGQLDAKKHMFSVPRVRGTITHPVQGHDAAGTVLLRPAAPGTGVIAGGSVRAVMECAGITDVLTKSMGSATAVNVVRATVDALKQLEEPEEIAARRGLALDEVAPDALLRARAAGIAEARKAREEAAAAKAAEEKDGE</sequence>